<feature type="chain" id="PRO_1000092036" description="5'/3'-nucleotidase SurE">
    <location>
        <begin position="1"/>
        <end position="253"/>
    </location>
</feature>
<feature type="binding site" evidence="1">
    <location>
        <position position="8"/>
    </location>
    <ligand>
        <name>a divalent metal cation</name>
        <dbReference type="ChEBI" id="CHEBI:60240"/>
    </ligand>
</feature>
<feature type="binding site" evidence="1">
    <location>
        <position position="9"/>
    </location>
    <ligand>
        <name>a divalent metal cation</name>
        <dbReference type="ChEBI" id="CHEBI:60240"/>
    </ligand>
</feature>
<feature type="binding site" evidence="1">
    <location>
        <position position="39"/>
    </location>
    <ligand>
        <name>a divalent metal cation</name>
        <dbReference type="ChEBI" id="CHEBI:60240"/>
    </ligand>
</feature>
<feature type="binding site" evidence="1">
    <location>
        <position position="92"/>
    </location>
    <ligand>
        <name>a divalent metal cation</name>
        <dbReference type="ChEBI" id="CHEBI:60240"/>
    </ligand>
</feature>
<organism>
    <name type="scientific">Salmonella schwarzengrund (strain CVM19633)</name>
    <dbReference type="NCBI Taxonomy" id="439843"/>
    <lineage>
        <taxon>Bacteria</taxon>
        <taxon>Pseudomonadati</taxon>
        <taxon>Pseudomonadota</taxon>
        <taxon>Gammaproteobacteria</taxon>
        <taxon>Enterobacterales</taxon>
        <taxon>Enterobacteriaceae</taxon>
        <taxon>Salmonella</taxon>
    </lineage>
</organism>
<proteinExistence type="inferred from homology"/>
<keyword id="KW-0963">Cytoplasm</keyword>
<keyword id="KW-0378">Hydrolase</keyword>
<keyword id="KW-0479">Metal-binding</keyword>
<keyword id="KW-0547">Nucleotide-binding</keyword>
<gene>
    <name evidence="1" type="primary">surE</name>
    <name type="ordered locus">SeSA_A3078</name>
</gene>
<dbReference type="EC" id="3.1.3.5" evidence="1"/>
<dbReference type="EC" id="3.1.3.6" evidence="1"/>
<dbReference type="EC" id="3.6.1.11" evidence="1"/>
<dbReference type="EMBL" id="CP001127">
    <property type="protein sequence ID" value="ACF89471.1"/>
    <property type="molecule type" value="Genomic_DNA"/>
</dbReference>
<dbReference type="RefSeq" id="WP_001221538.1">
    <property type="nucleotide sequence ID" value="NC_011094.1"/>
</dbReference>
<dbReference type="SMR" id="B4TTV8"/>
<dbReference type="KEGG" id="sew:SeSA_A3078"/>
<dbReference type="HOGENOM" id="CLU_045192_1_2_6"/>
<dbReference type="Proteomes" id="UP000001865">
    <property type="component" value="Chromosome"/>
</dbReference>
<dbReference type="GO" id="GO:0005737">
    <property type="term" value="C:cytoplasm"/>
    <property type="evidence" value="ECO:0007669"/>
    <property type="project" value="UniProtKB-SubCell"/>
</dbReference>
<dbReference type="GO" id="GO:0008254">
    <property type="term" value="F:3'-nucleotidase activity"/>
    <property type="evidence" value="ECO:0007669"/>
    <property type="project" value="UniProtKB-UniRule"/>
</dbReference>
<dbReference type="GO" id="GO:0008253">
    <property type="term" value="F:5'-nucleotidase activity"/>
    <property type="evidence" value="ECO:0007669"/>
    <property type="project" value="UniProtKB-UniRule"/>
</dbReference>
<dbReference type="GO" id="GO:0004309">
    <property type="term" value="F:exopolyphosphatase activity"/>
    <property type="evidence" value="ECO:0007669"/>
    <property type="project" value="UniProtKB-UniRule"/>
</dbReference>
<dbReference type="GO" id="GO:0046872">
    <property type="term" value="F:metal ion binding"/>
    <property type="evidence" value="ECO:0007669"/>
    <property type="project" value="UniProtKB-UniRule"/>
</dbReference>
<dbReference type="GO" id="GO:0000166">
    <property type="term" value="F:nucleotide binding"/>
    <property type="evidence" value="ECO:0007669"/>
    <property type="project" value="UniProtKB-KW"/>
</dbReference>
<dbReference type="FunFam" id="3.40.1210.10:FF:000001">
    <property type="entry name" value="5'/3'-nucleotidase SurE"/>
    <property type="match status" value="1"/>
</dbReference>
<dbReference type="Gene3D" id="3.40.1210.10">
    <property type="entry name" value="Survival protein SurE-like phosphatase/nucleotidase"/>
    <property type="match status" value="1"/>
</dbReference>
<dbReference type="HAMAP" id="MF_00060">
    <property type="entry name" value="SurE"/>
    <property type="match status" value="1"/>
</dbReference>
<dbReference type="InterPro" id="IPR030048">
    <property type="entry name" value="SurE"/>
</dbReference>
<dbReference type="InterPro" id="IPR002828">
    <property type="entry name" value="SurE-like_Pase/nucleotidase"/>
</dbReference>
<dbReference type="InterPro" id="IPR036523">
    <property type="entry name" value="SurE-like_sf"/>
</dbReference>
<dbReference type="NCBIfam" id="NF001488">
    <property type="entry name" value="PRK00346.1-1"/>
    <property type="match status" value="1"/>
</dbReference>
<dbReference type="NCBIfam" id="NF001489">
    <property type="entry name" value="PRK00346.1-3"/>
    <property type="match status" value="1"/>
</dbReference>
<dbReference type="NCBIfam" id="NF001490">
    <property type="entry name" value="PRK00346.1-4"/>
    <property type="match status" value="1"/>
</dbReference>
<dbReference type="NCBIfam" id="TIGR00087">
    <property type="entry name" value="surE"/>
    <property type="match status" value="1"/>
</dbReference>
<dbReference type="PANTHER" id="PTHR30457">
    <property type="entry name" value="5'-NUCLEOTIDASE SURE"/>
    <property type="match status" value="1"/>
</dbReference>
<dbReference type="PANTHER" id="PTHR30457:SF12">
    <property type="entry name" value="5'_3'-NUCLEOTIDASE SURE"/>
    <property type="match status" value="1"/>
</dbReference>
<dbReference type="Pfam" id="PF01975">
    <property type="entry name" value="SurE"/>
    <property type="match status" value="1"/>
</dbReference>
<dbReference type="SUPFAM" id="SSF64167">
    <property type="entry name" value="SurE-like"/>
    <property type="match status" value="1"/>
</dbReference>
<name>SURE_SALSV</name>
<protein>
    <recommendedName>
        <fullName evidence="1">5'/3'-nucleotidase SurE</fullName>
        <ecNumber evidence="1">3.1.3.5</ecNumber>
        <ecNumber evidence="1">3.1.3.6</ecNumber>
    </recommendedName>
    <alternativeName>
        <fullName evidence="1">Exopolyphosphatase</fullName>
        <ecNumber evidence="1">3.6.1.11</ecNumber>
    </alternativeName>
    <alternativeName>
        <fullName evidence="1">Nucleoside monophosphate phosphohydrolase</fullName>
    </alternativeName>
</protein>
<accession>B4TTV8</accession>
<evidence type="ECO:0000255" key="1">
    <source>
        <dbReference type="HAMAP-Rule" id="MF_00060"/>
    </source>
</evidence>
<comment type="function">
    <text evidence="1">Nucleotidase with a broad substrate specificity as it can dephosphorylate various ribo- and deoxyribonucleoside 5'-monophosphates and ribonucleoside 3'-monophosphates with highest affinity to 3'-AMP. Also hydrolyzes polyphosphate (exopolyphosphatase activity) with the preference for short-chain-length substrates (P20-25). Might be involved in the regulation of dNTP and NTP pools, and in the turnover of 3'-mononucleotides produced by numerous intracellular RNases (T1, T2, and F) during the degradation of various RNAs.</text>
</comment>
<comment type="catalytic activity">
    <reaction evidence="1">
        <text>a ribonucleoside 5'-phosphate + H2O = a ribonucleoside + phosphate</text>
        <dbReference type="Rhea" id="RHEA:12484"/>
        <dbReference type="ChEBI" id="CHEBI:15377"/>
        <dbReference type="ChEBI" id="CHEBI:18254"/>
        <dbReference type="ChEBI" id="CHEBI:43474"/>
        <dbReference type="ChEBI" id="CHEBI:58043"/>
        <dbReference type="EC" id="3.1.3.5"/>
    </reaction>
</comment>
<comment type="catalytic activity">
    <reaction evidence="1">
        <text>a ribonucleoside 3'-phosphate + H2O = a ribonucleoside + phosphate</text>
        <dbReference type="Rhea" id="RHEA:10144"/>
        <dbReference type="ChEBI" id="CHEBI:13197"/>
        <dbReference type="ChEBI" id="CHEBI:15377"/>
        <dbReference type="ChEBI" id="CHEBI:18254"/>
        <dbReference type="ChEBI" id="CHEBI:43474"/>
        <dbReference type="EC" id="3.1.3.6"/>
    </reaction>
</comment>
<comment type="catalytic activity">
    <reaction evidence="1">
        <text>[phosphate](n) + H2O = [phosphate](n-1) + phosphate + H(+)</text>
        <dbReference type="Rhea" id="RHEA:21528"/>
        <dbReference type="Rhea" id="RHEA-COMP:9859"/>
        <dbReference type="Rhea" id="RHEA-COMP:14279"/>
        <dbReference type="ChEBI" id="CHEBI:15377"/>
        <dbReference type="ChEBI" id="CHEBI:15378"/>
        <dbReference type="ChEBI" id="CHEBI:16838"/>
        <dbReference type="ChEBI" id="CHEBI:43474"/>
        <dbReference type="EC" id="3.6.1.11"/>
    </reaction>
</comment>
<comment type="cofactor">
    <cofactor evidence="1">
        <name>a divalent metal cation</name>
        <dbReference type="ChEBI" id="CHEBI:60240"/>
    </cofactor>
    <text evidence="1">Binds 1 divalent metal cation per subunit.</text>
</comment>
<comment type="subcellular location">
    <subcellularLocation>
        <location evidence="1">Cytoplasm</location>
    </subcellularLocation>
</comment>
<comment type="similarity">
    <text evidence="1">Belongs to the SurE nucleotidase family.</text>
</comment>
<reference key="1">
    <citation type="journal article" date="2011" name="J. Bacteriol.">
        <title>Comparative genomics of 28 Salmonella enterica isolates: evidence for CRISPR-mediated adaptive sublineage evolution.</title>
        <authorList>
            <person name="Fricke W.F."/>
            <person name="Mammel M.K."/>
            <person name="McDermott P.F."/>
            <person name="Tartera C."/>
            <person name="White D.G."/>
            <person name="Leclerc J.E."/>
            <person name="Ravel J."/>
            <person name="Cebula T.A."/>
        </authorList>
    </citation>
    <scope>NUCLEOTIDE SEQUENCE [LARGE SCALE GENOMIC DNA]</scope>
    <source>
        <strain>CVM19633</strain>
    </source>
</reference>
<sequence>MRILLSNDDGVHAPGIQTLAKALREFADVQVVAPDRNRSGASNSLTLESSLRTFTFDNGDIAVQMGTPTDCVYLGVNALMRPRPDIVVSGINAGPNLGDDVIYSGTVAAAMEGRHLGFPALAVSLNGYQHYDTAAAVTCALLRGLSREPLRTGRILNVNVPDLPLAQVKGIRVTRCGSRHPADKVIPQEDPRGNTLYWIGPPGDKYDAGPDTDFAAVDEGYVSVTPLHVDLTAHSAHDVVSDWLDSVGVGTQW</sequence>